<dbReference type="EC" id="2.5.1.3" evidence="1"/>
<dbReference type="EMBL" id="AE005176">
    <property type="protein sequence ID" value="AAK05360.1"/>
    <property type="molecule type" value="Genomic_DNA"/>
</dbReference>
<dbReference type="PIR" id="F86782">
    <property type="entry name" value="F86782"/>
</dbReference>
<dbReference type="RefSeq" id="NP_267418.1">
    <property type="nucleotide sequence ID" value="NC_002662.1"/>
</dbReference>
<dbReference type="RefSeq" id="WP_003130222.1">
    <property type="nucleotide sequence ID" value="NC_002662.1"/>
</dbReference>
<dbReference type="SMR" id="Q9CG48"/>
<dbReference type="PaxDb" id="272623-L0201"/>
<dbReference type="EnsemblBacteria" id="AAK05360">
    <property type="protein sequence ID" value="AAK05360"/>
    <property type="gene ID" value="L0201"/>
</dbReference>
<dbReference type="KEGG" id="lla:L0201"/>
<dbReference type="PATRIC" id="fig|272623.7.peg.1364"/>
<dbReference type="eggNOG" id="COG0352">
    <property type="taxonomic scope" value="Bacteria"/>
</dbReference>
<dbReference type="HOGENOM" id="CLU_018272_3_2_9"/>
<dbReference type="OrthoDB" id="9812206at2"/>
<dbReference type="UniPathway" id="UPA00060">
    <property type="reaction ID" value="UER00141"/>
</dbReference>
<dbReference type="Proteomes" id="UP000002196">
    <property type="component" value="Chromosome"/>
</dbReference>
<dbReference type="GO" id="GO:0005737">
    <property type="term" value="C:cytoplasm"/>
    <property type="evidence" value="ECO:0007669"/>
    <property type="project" value="TreeGrafter"/>
</dbReference>
<dbReference type="GO" id="GO:0000287">
    <property type="term" value="F:magnesium ion binding"/>
    <property type="evidence" value="ECO:0007669"/>
    <property type="project" value="UniProtKB-UniRule"/>
</dbReference>
<dbReference type="GO" id="GO:0004789">
    <property type="term" value="F:thiamine-phosphate diphosphorylase activity"/>
    <property type="evidence" value="ECO:0007669"/>
    <property type="project" value="UniProtKB-UniRule"/>
</dbReference>
<dbReference type="GO" id="GO:0009228">
    <property type="term" value="P:thiamine biosynthetic process"/>
    <property type="evidence" value="ECO:0007669"/>
    <property type="project" value="UniProtKB-KW"/>
</dbReference>
<dbReference type="GO" id="GO:0009229">
    <property type="term" value="P:thiamine diphosphate biosynthetic process"/>
    <property type="evidence" value="ECO:0007669"/>
    <property type="project" value="UniProtKB-UniRule"/>
</dbReference>
<dbReference type="CDD" id="cd00564">
    <property type="entry name" value="TMP_TenI"/>
    <property type="match status" value="1"/>
</dbReference>
<dbReference type="FunFam" id="3.20.20.70:FF:000096">
    <property type="entry name" value="Thiamine-phosphate synthase"/>
    <property type="match status" value="1"/>
</dbReference>
<dbReference type="Gene3D" id="3.20.20.70">
    <property type="entry name" value="Aldolase class I"/>
    <property type="match status" value="1"/>
</dbReference>
<dbReference type="HAMAP" id="MF_00097">
    <property type="entry name" value="TMP_synthase"/>
    <property type="match status" value="1"/>
</dbReference>
<dbReference type="InterPro" id="IPR013785">
    <property type="entry name" value="Aldolase_TIM"/>
</dbReference>
<dbReference type="InterPro" id="IPR036206">
    <property type="entry name" value="ThiamineP_synth_sf"/>
</dbReference>
<dbReference type="InterPro" id="IPR022998">
    <property type="entry name" value="ThiamineP_synth_TenI"/>
</dbReference>
<dbReference type="InterPro" id="IPR034291">
    <property type="entry name" value="TMP_synthase"/>
</dbReference>
<dbReference type="NCBIfam" id="TIGR00693">
    <property type="entry name" value="thiE"/>
    <property type="match status" value="1"/>
</dbReference>
<dbReference type="PANTHER" id="PTHR20857">
    <property type="entry name" value="THIAMINE-PHOSPHATE PYROPHOSPHORYLASE"/>
    <property type="match status" value="1"/>
</dbReference>
<dbReference type="PANTHER" id="PTHR20857:SF15">
    <property type="entry name" value="THIAMINE-PHOSPHATE SYNTHASE"/>
    <property type="match status" value="1"/>
</dbReference>
<dbReference type="Pfam" id="PF02581">
    <property type="entry name" value="TMP-TENI"/>
    <property type="match status" value="1"/>
</dbReference>
<dbReference type="SUPFAM" id="SSF51391">
    <property type="entry name" value="Thiamin phosphate synthase"/>
    <property type="match status" value="1"/>
</dbReference>
<sequence length="215" mass="23657">MKNKILDLRAYFIAGPQDFPKLSIDDAIDKISVIIKSGVTVYQFRDKGTIYKNKNQRLEVAKRLQEVAQKAAVSFIVNDDVELARELSADGIHVGQDDDSVSKIRELIGQEMWVGLSVSNDMELESAQKSGADYLGIGPIYPTNSKSDAAEPIGVDHLRKMLEHNQLPTVGIGGITENSLTELSKIGLGGVAVISLLTESENYKNMVQKIKQNIR</sequence>
<evidence type="ECO:0000255" key="1">
    <source>
        <dbReference type="HAMAP-Rule" id="MF_00097"/>
    </source>
</evidence>
<keyword id="KW-0460">Magnesium</keyword>
<keyword id="KW-0479">Metal-binding</keyword>
<keyword id="KW-1185">Reference proteome</keyword>
<keyword id="KW-0784">Thiamine biosynthesis</keyword>
<keyword id="KW-0808">Transferase</keyword>
<gene>
    <name evidence="1" type="primary">thiE</name>
    <name type="ordered locus">LL1262</name>
    <name type="ORF">L0201</name>
</gene>
<feature type="chain" id="PRO_0000157019" description="Thiamine-phosphate synthase">
    <location>
        <begin position="1"/>
        <end position="215"/>
    </location>
</feature>
<feature type="binding site" evidence="1">
    <location>
        <begin position="43"/>
        <end position="47"/>
    </location>
    <ligand>
        <name>4-amino-2-methyl-5-(diphosphooxymethyl)pyrimidine</name>
        <dbReference type="ChEBI" id="CHEBI:57841"/>
    </ligand>
</feature>
<feature type="binding site" evidence="1">
    <location>
        <position position="78"/>
    </location>
    <ligand>
        <name>4-amino-2-methyl-5-(diphosphooxymethyl)pyrimidine</name>
        <dbReference type="ChEBI" id="CHEBI:57841"/>
    </ligand>
</feature>
<feature type="binding site" evidence="1">
    <location>
        <position position="79"/>
    </location>
    <ligand>
        <name>Mg(2+)</name>
        <dbReference type="ChEBI" id="CHEBI:18420"/>
    </ligand>
</feature>
<feature type="binding site" evidence="1">
    <location>
        <position position="98"/>
    </location>
    <ligand>
        <name>Mg(2+)</name>
        <dbReference type="ChEBI" id="CHEBI:18420"/>
    </ligand>
</feature>
<feature type="binding site" evidence="1">
    <location>
        <position position="117"/>
    </location>
    <ligand>
        <name>4-amino-2-methyl-5-(diphosphooxymethyl)pyrimidine</name>
        <dbReference type="ChEBI" id="CHEBI:57841"/>
    </ligand>
</feature>
<feature type="binding site" evidence="1">
    <location>
        <begin position="143"/>
        <end position="145"/>
    </location>
    <ligand>
        <name>2-[(2R,5Z)-2-carboxy-4-methylthiazol-5(2H)-ylidene]ethyl phosphate</name>
        <dbReference type="ChEBI" id="CHEBI:62899"/>
    </ligand>
</feature>
<feature type="binding site" evidence="1">
    <location>
        <position position="146"/>
    </location>
    <ligand>
        <name>4-amino-2-methyl-5-(diphosphooxymethyl)pyrimidine</name>
        <dbReference type="ChEBI" id="CHEBI:57841"/>
    </ligand>
</feature>
<feature type="binding site" evidence="1">
    <location>
        <position position="174"/>
    </location>
    <ligand>
        <name>2-[(2R,5Z)-2-carboxy-4-methylthiazol-5(2H)-ylidene]ethyl phosphate</name>
        <dbReference type="ChEBI" id="CHEBI:62899"/>
    </ligand>
</feature>
<feature type="binding site" evidence="1">
    <location>
        <begin position="194"/>
        <end position="195"/>
    </location>
    <ligand>
        <name>2-[(2R,5Z)-2-carboxy-4-methylthiazol-5(2H)-ylidene]ethyl phosphate</name>
        <dbReference type="ChEBI" id="CHEBI:62899"/>
    </ligand>
</feature>
<organism>
    <name type="scientific">Lactococcus lactis subsp. lactis (strain IL1403)</name>
    <name type="common">Streptococcus lactis</name>
    <dbReference type="NCBI Taxonomy" id="272623"/>
    <lineage>
        <taxon>Bacteria</taxon>
        <taxon>Bacillati</taxon>
        <taxon>Bacillota</taxon>
        <taxon>Bacilli</taxon>
        <taxon>Lactobacillales</taxon>
        <taxon>Streptococcaceae</taxon>
        <taxon>Lactococcus</taxon>
    </lineage>
</organism>
<name>THIE_LACLA</name>
<comment type="function">
    <text evidence="1">Condenses 4-methyl-5-(beta-hydroxyethyl)thiazole monophosphate (THZ-P) and 2-methyl-4-amino-5-hydroxymethyl pyrimidine pyrophosphate (HMP-PP) to form thiamine monophosphate (TMP).</text>
</comment>
<comment type="catalytic activity">
    <reaction evidence="1">
        <text>2-[(2R,5Z)-2-carboxy-4-methylthiazol-5(2H)-ylidene]ethyl phosphate + 4-amino-2-methyl-5-(diphosphooxymethyl)pyrimidine + 2 H(+) = thiamine phosphate + CO2 + diphosphate</text>
        <dbReference type="Rhea" id="RHEA:47844"/>
        <dbReference type="ChEBI" id="CHEBI:15378"/>
        <dbReference type="ChEBI" id="CHEBI:16526"/>
        <dbReference type="ChEBI" id="CHEBI:33019"/>
        <dbReference type="ChEBI" id="CHEBI:37575"/>
        <dbReference type="ChEBI" id="CHEBI:57841"/>
        <dbReference type="ChEBI" id="CHEBI:62899"/>
        <dbReference type="EC" id="2.5.1.3"/>
    </reaction>
</comment>
<comment type="catalytic activity">
    <reaction evidence="1">
        <text>2-(2-carboxy-4-methylthiazol-5-yl)ethyl phosphate + 4-amino-2-methyl-5-(diphosphooxymethyl)pyrimidine + 2 H(+) = thiamine phosphate + CO2 + diphosphate</text>
        <dbReference type="Rhea" id="RHEA:47848"/>
        <dbReference type="ChEBI" id="CHEBI:15378"/>
        <dbReference type="ChEBI" id="CHEBI:16526"/>
        <dbReference type="ChEBI" id="CHEBI:33019"/>
        <dbReference type="ChEBI" id="CHEBI:37575"/>
        <dbReference type="ChEBI" id="CHEBI:57841"/>
        <dbReference type="ChEBI" id="CHEBI:62890"/>
        <dbReference type="EC" id="2.5.1.3"/>
    </reaction>
</comment>
<comment type="catalytic activity">
    <reaction evidence="1">
        <text>4-methyl-5-(2-phosphooxyethyl)-thiazole + 4-amino-2-methyl-5-(diphosphooxymethyl)pyrimidine + H(+) = thiamine phosphate + diphosphate</text>
        <dbReference type="Rhea" id="RHEA:22328"/>
        <dbReference type="ChEBI" id="CHEBI:15378"/>
        <dbReference type="ChEBI" id="CHEBI:33019"/>
        <dbReference type="ChEBI" id="CHEBI:37575"/>
        <dbReference type="ChEBI" id="CHEBI:57841"/>
        <dbReference type="ChEBI" id="CHEBI:58296"/>
        <dbReference type="EC" id="2.5.1.3"/>
    </reaction>
</comment>
<comment type="cofactor">
    <cofactor evidence="1">
        <name>Mg(2+)</name>
        <dbReference type="ChEBI" id="CHEBI:18420"/>
    </cofactor>
    <text evidence="1">Binds 1 Mg(2+) ion per subunit.</text>
</comment>
<comment type="pathway">
    <text evidence="1">Cofactor biosynthesis; thiamine diphosphate biosynthesis; thiamine phosphate from 4-amino-2-methyl-5-diphosphomethylpyrimidine and 4-methyl-5-(2-phosphoethyl)-thiazole: step 1/1.</text>
</comment>
<comment type="similarity">
    <text evidence="1">Belongs to the thiamine-phosphate synthase family.</text>
</comment>
<accession>Q9CG48</accession>
<protein>
    <recommendedName>
        <fullName evidence="1">Thiamine-phosphate synthase</fullName>
        <shortName evidence="1">TP synthase</shortName>
        <shortName evidence="1">TPS</shortName>
        <ecNumber evidence="1">2.5.1.3</ecNumber>
    </recommendedName>
    <alternativeName>
        <fullName evidence="1">Thiamine-phosphate pyrophosphorylase</fullName>
        <shortName evidence="1">TMP pyrophosphorylase</shortName>
        <shortName evidence="1">TMP-PPase</shortName>
    </alternativeName>
</protein>
<reference key="1">
    <citation type="journal article" date="2001" name="Genome Res.">
        <title>The complete genome sequence of the lactic acid bacterium Lactococcus lactis ssp. lactis IL1403.</title>
        <authorList>
            <person name="Bolotin A."/>
            <person name="Wincker P."/>
            <person name="Mauger S."/>
            <person name="Jaillon O."/>
            <person name="Malarme K."/>
            <person name="Weissenbach J."/>
            <person name="Ehrlich S.D."/>
            <person name="Sorokin A."/>
        </authorList>
    </citation>
    <scope>NUCLEOTIDE SEQUENCE [LARGE SCALE GENOMIC DNA]</scope>
    <source>
        <strain>IL1403</strain>
    </source>
</reference>
<proteinExistence type="inferred from homology"/>